<comment type="function">
    <text evidence="1">Component of the dark-operative protochlorophyllide reductase (DPOR) that uses Mg-ATP and reduced ferredoxin to reduce ring D of protochlorophyllide (Pchlide) to form chlorophyllide a (Chlide). This reaction is light-independent. The NB-protein (ChlN-ChlB) is the catalytic component of the complex.</text>
</comment>
<comment type="catalytic activity">
    <reaction evidence="1">
        <text>chlorophyllide a + oxidized 2[4Fe-4S]-[ferredoxin] + 2 ADP + 2 phosphate = protochlorophyllide a + reduced 2[4Fe-4S]-[ferredoxin] + 2 ATP + 2 H2O</text>
        <dbReference type="Rhea" id="RHEA:28202"/>
        <dbReference type="Rhea" id="RHEA-COMP:10002"/>
        <dbReference type="Rhea" id="RHEA-COMP:10004"/>
        <dbReference type="ChEBI" id="CHEBI:15377"/>
        <dbReference type="ChEBI" id="CHEBI:30616"/>
        <dbReference type="ChEBI" id="CHEBI:33722"/>
        <dbReference type="ChEBI" id="CHEBI:33723"/>
        <dbReference type="ChEBI" id="CHEBI:43474"/>
        <dbReference type="ChEBI" id="CHEBI:83348"/>
        <dbReference type="ChEBI" id="CHEBI:83350"/>
        <dbReference type="ChEBI" id="CHEBI:456216"/>
        <dbReference type="EC" id="1.3.7.7"/>
    </reaction>
</comment>
<comment type="cofactor">
    <cofactor evidence="1">
        <name>[4Fe-4S] cluster</name>
        <dbReference type="ChEBI" id="CHEBI:49883"/>
    </cofactor>
    <text evidence="1">Binds 1 [4Fe-4S] cluster per heterodimer. The cluster is bound at the heterodimer interface by residues from both subunits.</text>
</comment>
<comment type="pathway">
    <text evidence="1">Porphyrin-containing compound metabolism; chlorophyll biosynthesis (light-independent).</text>
</comment>
<comment type="subunit">
    <text evidence="1">Protochlorophyllide reductase is composed of three subunits; ChlL, ChlN and ChlB. Forms a heterotetramer of two ChlB and two ChlN subunits.</text>
</comment>
<comment type="similarity">
    <text evidence="1">Belongs to the ChlB/BchB/BchZ family.</text>
</comment>
<feature type="chain" id="PRO_0000219807" description="Light-independent protochlorophyllide reductase subunit B">
    <location>
        <begin position="1"/>
        <end position="508"/>
    </location>
</feature>
<feature type="active site" description="Proton donor" evidence="1">
    <location>
        <position position="294"/>
    </location>
</feature>
<feature type="binding site" evidence="1">
    <location>
        <position position="36"/>
    </location>
    <ligand>
        <name>[4Fe-4S] cluster</name>
        <dbReference type="ChEBI" id="CHEBI:49883"/>
        <note>ligand shared with heterodimeric partner</note>
    </ligand>
</feature>
<feature type="binding site" evidence="1">
    <location>
        <begin position="429"/>
        <end position="430"/>
    </location>
    <ligand>
        <name>substrate</name>
    </ligand>
</feature>
<evidence type="ECO:0000255" key="1">
    <source>
        <dbReference type="HAMAP-Rule" id="MF_00353"/>
    </source>
</evidence>
<keyword id="KW-0004">4Fe-4S</keyword>
<keyword id="KW-0067">ATP-binding</keyword>
<keyword id="KW-0149">Chlorophyll biosynthesis</keyword>
<keyword id="KW-0408">Iron</keyword>
<keyword id="KW-0411">Iron-sulfur</keyword>
<keyword id="KW-0479">Metal-binding</keyword>
<keyword id="KW-0547">Nucleotide-binding</keyword>
<keyword id="KW-0560">Oxidoreductase</keyword>
<keyword id="KW-0602">Photosynthesis</keyword>
<keyword id="KW-1185">Reference proteome</keyword>
<sequence>MKLAYWMYAGPAHIGTLRIASSFKNVHAIMHAPLGDDYFNVMRSMLEREQNFTPVTTSVVDRQVLSRGSQEKVVDNIVRKDGEETPDLIVLTPTCTSSILQEDLANFVDRAQMDAHCDVLLADVNHYRYNELQAGDRTLKQIVEFYIKKARKQGNLATEKTAKPSVNLIGFTTLGFHNQHDCTELKRLMADLGIEVNLILPEKATVDQLAKIPQAWFNLCPYREIGLMTAEYLQEEFAQPYVDITPMGVVETARCIRKMQQVLNQQGFDVNYEDFIQQQTRHVSQAAWFSRSIDCQNLTGKKAVVFGDNTHAAAMTKILAREMGIHVVLAGTYCKYDADWFRAEVSEYCDEVLISEDNGAIADAIARIEPAAIFGTQMERHVGKRLDIPCGVIAAPIHIQNFPLGYKPFLGYEGTNQIADLVYNSFTLGMEDHLLEIFGGHDTKEVITKGISSDSDLGWHSTAQAELNKVPGFVRGKVKRNTEKFARERGLSEITLEVMYAAKEAVGA</sequence>
<proteinExistence type="inferred from homology"/>
<name>CHLB_SYNY3</name>
<reference key="1">
    <citation type="journal article" date="1995" name="DNA Res.">
        <title>Sequence analysis of the genome of the unicellular cyanobacterium Synechocystis sp. strain PCC6803. I. Sequence features in the 1 Mb region from map positions 64% to 92% of the genome.</title>
        <authorList>
            <person name="Kaneko T."/>
            <person name="Tanaka A."/>
            <person name="Sato S."/>
            <person name="Kotani H."/>
            <person name="Sazuka T."/>
            <person name="Miyajima N."/>
            <person name="Sugiura M."/>
            <person name="Tabata S."/>
        </authorList>
    </citation>
    <scope>NUCLEOTIDE SEQUENCE [LARGE SCALE GENOMIC DNA]</scope>
    <source>
        <strain>ATCC 27184 / PCC 6803 / N-1</strain>
    </source>
</reference>
<reference key="2">
    <citation type="journal article" date="1996" name="DNA Res.">
        <title>Sequence analysis of the genome of the unicellular cyanobacterium Synechocystis sp. strain PCC6803. II. Sequence determination of the entire genome and assignment of potential protein-coding regions.</title>
        <authorList>
            <person name="Kaneko T."/>
            <person name="Sato S."/>
            <person name="Kotani H."/>
            <person name="Tanaka A."/>
            <person name="Asamizu E."/>
            <person name="Nakamura Y."/>
            <person name="Miyajima N."/>
            <person name="Hirosawa M."/>
            <person name="Sugiura M."/>
            <person name="Sasamoto S."/>
            <person name="Kimura T."/>
            <person name="Hosouchi T."/>
            <person name="Matsuno A."/>
            <person name="Muraki A."/>
            <person name="Nakazaki N."/>
            <person name="Naruo K."/>
            <person name="Okumura S."/>
            <person name="Shimpo S."/>
            <person name="Takeuchi C."/>
            <person name="Wada T."/>
            <person name="Watanabe A."/>
            <person name="Yamada M."/>
            <person name="Yasuda M."/>
            <person name="Tabata S."/>
        </authorList>
    </citation>
    <scope>NUCLEOTIDE SEQUENCE [LARGE SCALE GENOMIC DNA]</scope>
    <source>
        <strain>ATCC 27184 / PCC 6803 / Kazusa</strain>
    </source>
</reference>
<dbReference type="EC" id="1.3.7.7" evidence="1"/>
<dbReference type="EMBL" id="BA000022">
    <property type="protein sequence ID" value="BAA10114.1"/>
    <property type="molecule type" value="Genomic_DNA"/>
</dbReference>
<dbReference type="PIR" id="S76262">
    <property type="entry name" value="S76262"/>
</dbReference>
<dbReference type="SMR" id="Q55607"/>
<dbReference type="IntAct" id="Q55607">
    <property type="interactions" value="1"/>
</dbReference>
<dbReference type="STRING" id="1148.gene:10499606"/>
<dbReference type="PaxDb" id="1148-1001489"/>
<dbReference type="EnsemblBacteria" id="BAA10114">
    <property type="protein sequence ID" value="BAA10114"/>
    <property type="gene ID" value="BAA10114"/>
</dbReference>
<dbReference type="KEGG" id="syn:slr0772"/>
<dbReference type="eggNOG" id="COG2710">
    <property type="taxonomic scope" value="Bacteria"/>
</dbReference>
<dbReference type="InParanoid" id="Q55607"/>
<dbReference type="PhylomeDB" id="Q55607"/>
<dbReference type="UniPathway" id="UPA00670"/>
<dbReference type="Proteomes" id="UP000001425">
    <property type="component" value="Chromosome"/>
</dbReference>
<dbReference type="GO" id="GO:0051539">
    <property type="term" value="F:4 iron, 4 sulfur cluster binding"/>
    <property type="evidence" value="ECO:0007669"/>
    <property type="project" value="UniProtKB-UniRule"/>
</dbReference>
<dbReference type="GO" id="GO:0005524">
    <property type="term" value="F:ATP binding"/>
    <property type="evidence" value="ECO:0007669"/>
    <property type="project" value="UniProtKB-UniRule"/>
</dbReference>
<dbReference type="GO" id="GO:0046872">
    <property type="term" value="F:metal ion binding"/>
    <property type="evidence" value="ECO:0007669"/>
    <property type="project" value="UniProtKB-KW"/>
</dbReference>
<dbReference type="GO" id="GO:0016730">
    <property type="term" value="F:oxidoreductase activity, acting on iron-sulfur proteins as donors"/>
    <property type="evidence" value="ECO:0007669"/>
    <property type="project" value="InterPro"/>
</dbReference>
<dbReference type="GO" id="GO:0016636">
    <property type="term" value="F:oxidoreductase activity, acting on the CH-CH group of donors, iron-sulfur protein as acceptor"/>
    <property type="evidence" value="ECO:0007669"/>
    <property type="project" value="UniProtKB-UniRule"/>
</dbReference>
<dbReference type="GO" id="GO:0036068">
    <property type="term" value="P:light-independent chlorophyll biosynthetic process"/>
    <property type="evidence" value="ECO:0007669"/>
    <property type="project" value="UniProtKB-UniRule"/>
</dbReference>
<dbReference type="GO" id="GO:0019685">
    <property type="term" value="P:photosynthesis, dark reaction"/>
    <property type="evidence" value="ECO:0007669"/>
    <property type="project" value="InterPro"/>
</dbReference>
<dbReference type="CDD" id="cd01981">
    <property type="entry name" value="Pchlide_reductase_B"/>
    <property type="match status" value="1"/>
</dbReference>
<dbReference type="Gene3D" id="1.20.89.20">
    <property type="match status" value="1"/>
</dbReference>
<dbReference type="Gene3D" id="3.40.50.1980">
    <property type="entry name" value="Nitrogenase molybdenum iron protein domain"/>
    <property type="match status" value="3"/>
</dbReference>
<dbReference type="Gene3D" id="1.10.8.550">
    <property type="entry name" value="Proto-chlorophyllide reductase 57 kD subunit B"/>
    <property type="match status" value="1"/>
</dbReference>
<dbReference type="HAMAP" id="MF_00353">
    <property type="entry name" value="ChlB_BchB"/>
    <property type="match status" value="1"/>
</dbReference>
<dbReference type="InterPro" id="IPR050152">
    <property type="entry name" value="ChlB/BchB/BchZ"/>
</dbReference>
<dbReference type="InterPro" id="IPR013580">
    <property type="entry name" value="LI-POR_suB-like_C"/>
</dbReference>
<dbReference type="InterPro" id="IPR000510">
    <property type="entry name" value="Nase/OxRdtase_comp1"/>
</dbReference>
<dbReference type="InterPro" id="IPR042298">
    <property type="entry name" value="P-CP_red_C"/>
</dbReference>
<dbReference type="InterPro" id="IPR005969">
    <property type="entry name" value="Protochl_reductB"/>
</dbReference>
<dbReference type="InterPro" id="IPR016209">
    <property type="entry name" value="Protochlorophyllide_Rdtase"/>
</dbReference>
<dbReference type="NCBIfam" id="TIGR01278">
    <property type="entry name" value="DPOR_BchB"/>
    <property type="match status" value="1"/>
</dbReference>
<dbReference type="PANTHER" id="PTHR33712">
    <property type="entry name" value="LIGHT-INDEPENDENT PROTOCHLOROPHYLLIDE REDUCTASE SUBUNIT B"/>
    <property type="match status" value="1"/>
</dbReference>
<dbReference type="PANTHER" id="PTHR33712:SF7">
    <property type="entry name" value="LIGHT-INDEPENDENT PROTOCHLOROPHYLLIDE REDUCTASE SUBUNIT B"/>
    <property type="match status" value="1"/>
</dbReference>
<dbReference type="Pfam" id="PF00148">
    <property type="entry name" value="Oxidored_nitro"/>
    <property type="match status" value="1"/>
</dbReference>
<dbReference type="Pfam" id="PF08369">
    <property type="entry name" value="PCP_red"/>
    <property type="match status" value="1"/>
</dbReference>
<dbReference type="PIRSF" id="PIRSF000163">
    <property type="entry name" value="PCP_ChlB"/>
    <property type="match status" value="1"/>
</dbReference>
<dbReference type="SUPFAM" id="SSF53807">
    <property type="entry name" value="Helical backbone' metal receptor"/>
    <property type="match status" value="1"/>
</dbReference>
<organism>
    <name type="scientific">Synechocystis sp. (strain ATCC 27184 / PCC 6803 / Kazusa)</name>
    <dbReference type="NCBI Taxonomy" id="1111708"/>
    <lineage>
        <taxon>Bacteria</taxon>
        <taxon>Bacillati</taxon>
        <taxon>Cyanobacteriota</taxon>
        <taxon>Cyanophyceae</taxon>
        <taxon>Synechococcales</taxon>
        <taxon>Merismopediaceae</taxon>
        <taxon>Synechocystis</taxon>
    </lineage>
</organism>
<protein>
    <recommendedName>
        <fullName evidence="1">Light-independent protochlorophyllide reductase subunit B</fullName>
        <shortName evidence="1">DPOR subunit B</shortName>
        <shortName evidence="1">LI-POR subunit B</shortName>
        <ecNumber evidence="1">1.3.7.7</ecNumber>
    </recommendedName>
</protein>
<gene>
    <name evidence="1" type="primary">chlB</name>
    <name type="ordered locus">slr0772</name>
</gene>
<accession>Q55607</accession>